<sequence>MQFGCNVAEAFGLRRSGVVLLTDQSLRSMPLSQQKKVEIILDGMGRGSQAAQGLPSPITSLAFIRDSHHFLFLAVDEDQCLGILKGGIKHLFMLDSQNETHEMDAMCCLDFYTHETVQRRGIGTRLFRAMELHTHISAQGWAFDRPSPKLLAFLSKVYDMHDFKAQPNNFLMLDASIRLWGAEFKQYRRSKKHYIPDAYLLPETRESEYLGEAELTKRTLIRKSTAVIPQTKTTQSEDAPARALTADELLSKRSVVLPTASRTPSLPDQPQSVAAAYMNKRIEGAGPSFEQYMRDHYGAKSLIVPSEIQTSLNHSKDSVSQEDMIQRQRQLDRMAFTLAREANARGSIHNTVGRGVICGRRG</sequence>
<gene>
    <name type="ORF">GL50803_16348</name>
</gene>
<reference key="1">
    <citation type="journal article" date="2007" name="Science">
        <title>Genomic minimalism in the early diverging intestinal parasite Giardia lamblia.</title>
        <authorList>
            <person name="Morrison H.G."/>
            <person name="McArthur A.G."/>
            <person name="Gillin F.D."/>
            <person name="Aley S.B."/>
            <person name="Adam R.D."/>
            <person name="Olsen G.J."/>
            <person name="Best A.A."/>
            <person name="Cande W.Z."/>
            <person name="Chen F."/>
            <person name="Cipriano M.J."/>
            <person name="Davids B.J."/>
            <person name="Dawson S.C."/>
            <person name="Elmendorf H.G."/>
            <person name="Hehl A.B."/>
            <person name="Holder M.E."/>
            <person name="Huse S.M."/>
            <person name="Kim U.U."/>
            <person name="Lasek-Nesselquist E."/>
            <person name="Manning G."/>
            <person name="Nigam A."/>
            <person name="Nixon J.E.J."/>
            <person name="Palm D."/>
            <person name="Passamaneck N.E."/>
            <person name="Prabhu A."/>
            <person name="Reich C.I."/>
            <person name="Reiner D.S."/>
            <person name="Samuelson J."/>
            <person name="Svard S.G."/>
            <person name="Sogin M.L."/>
        </authorList>
    </citation>
    <scope>NUCLEOTIDE SEQUENCE [LARGE SCALE GENOMIC DNA]</scope>
    <source>
        <strain>ATCC 50803 / WB clone C6</strain>
    </source>
</reference>
<dbReference type="EC" id="2.3.1.108" evidence="1"/>
<dbReference type="EMBL" id="AACB02000025">
    <property type="protein sequence ID" value="EDO78575.1"/>
    <property type="molecule type" value="Genomic_DNA"/>
</dbReference>
<dbReference type="RefSeq" id="XP_001706249.1">
    <property type="nucleotide sequence ID" value="XM_001706197.1"/>
</dbReference>
<dbReference type="SMR" id="A8BM50"/>
<dbReference type="EnsemblProtists" id="EDO78575">
    <property type="protein sequence ID" value="EDO78575"/>
    <property type="gene ID" value="GL50803_16348"/>
</dbReference>
<dbReference type="GeneID" id="5699137"/>
<dbReference type="KEGG" id="gla:GL50803_0016348"/>
<dbReference type="VEuPathDB" id="GiardiaDB:GL50803_16348"/>
<dbReference type="HOGENOM" id="CLU_766034_0_0_1"/>
<dbReference type="OMA" id="WAFDRPS"/>
<dbReference type="GO" id="GO:0005874">
    <property type="term" value="C:microtubule"/>
    <property type="evidence" value="ECO:0007669"/>
    <property type="project" value="InterPro"/>
</dbReference>
<dbReference type="GO" id="GO:0019799">
    <property type="term" value="F:tubulin N-acetyltransferase activity"/>
    <property type="evidence" value="ECO:0007669"/>
    <property type="project" value="UniProtKB-UniRule"/>
</dbReference>
<dbReference type="GO" id="GO:0070507">
    <property type="term" value="P:regulation of microtubule cytoskeleton organization"/>
    <property type="evidence" value="ECO:0007669"/>
    <property type="project" value="UniProtKB-UniRule"/>
</dbReference>
<dbReference type="CDD" id="cd04301">
    <property type="entry name" value="NAT_SF"/>
    <property type="match status" value="1"/>
</dbReference>
<dbReference type="FunFam" id="3.40.630.30:FF:000142">
    <property type="entry name" value="Alpha-tubulin N-acetyltransferase 1"/>
    <property type="match status" value="1"/>
</dbReference>
<dbReference type="Gene3D" id="3.40.630.30">
    <property type="match status" value="1"/>
</dbReference>
<dbReference type="HAMAP" id="MF_03130">
    <property type="entry name" value="mec17"/>
    <property type="match status" value="1"/>
</dbReference>
<dbReference type="InterPro" id="IPR016181">
    <property type="entry name" value="Acyl_CoA_acyltransferase"/>
</dbReference>
<dbReference type="InterPro" id="IPR038746">
    <property type="entry name" value="Atat"/>
</dbReference>
<dbReference type="InterPro" id="IPR007965">
    <property type="entry name" value="GNAT_ATAT"/>
</dbReference>
<dbReference type="PANTHER" id="PTHR12327">
    <property type="entry name" value="ALPHA-TUBULIN N-ACETYLTRANSFERASE 1"/>
    <property type="match status" value="1"/>
</dbReference>
<dbReference type="PANTHER" id="PTHR12327:SF0">
    <property type="entry name" value="ALPHA-TUBULIN N-ACETYLTRANSFERASE 1"/>
    <property type="match status" value="1"/>
</dbReference>
<dbReference type="Pfam" id="PF05301">
    <property type="entry name" value="Acetyltransf_16"/>
    <property type="match status" value="1"/>
</dbReference>
<dbReference type="SUPFAM" id="SSF55729">
    <property type="entry name" value="Acyl-CoA N-acyltransferases (Nat)"/>
    <property type="match status" value="1"/>
</dbReference>
<dbReference type="PROSITE" id="PS51730">
    <property type="entry name" value="GNAT_ATAT"/>
    <property type="match status" value="1"/>
</dbReference>
<feature type="chain" id="PRO_0000402089" description="Alpha-tubulin N-acetyltransferase">
    <location>
        <begin position="1"/>
        <end position="362"/>
    </location>
</feature>
<feature type="domain" description="N-acetyltransferase" evidence="1">
    <location>
        <begin position="1"/>
        <end position="177"/>
    </location>
</feature>
<feature type="binding site" evidence="1">
    <location>
        <begin position="111"/>
        <end position="124"/>
    </location>
    <ligand>
        <name>acetyl-CoA</name>
        <dbReference type="ChEBI" id="CHEBI:57288"/>
    </ligand>
</feature>
<feature type="binding site" evidence="1">
    <location>
        <begin position="147"/>
        <end position="156"/>
    </location>
    <ligand>
        <name>acetyl-CoA</name>
        <dbReference type="ChEBI" id="CHEBI:57288"/>
    </ligand>
</feature>
<feature type="site" description="Crucial for catalytic activity" evidence="1">
    <location>
        <position position="52"/>
    </location>
</feature>
<accession>A8BM50</accession>
<keyword id="KW-0012">Acyltransferase</keyword>
<keyword id="KW-0808">Transferase</keyword>
<evidence type="ECO:0000255" key="1">
    <source>
        <dbReference type="HAMAP-Rule" id="MF_03130"/>
    </source>
</evidence>
<proteinExistence type="inferred from homology"/>
<protein>
    <recommendedName>
        <fullName evidence="1">Alpha-tubulin N-acetyltransferase</fullName>
        <shortName evidence="1">Alpha-TAT</shortName>
        <shortName evidence="1">TAT</shortName>
        <ecNumber evidence="1">2.3.1.108</ecNumber>
    </recommendedName>
    <alternativeName>
        <fullName evidence="1">Acetyltransferase mec-17 homolog</fullName>
    </alternativeName>
</protein>
<name>ATAT_GIAIC</name>
<comment type="function">
    <text evidence="1">Specifically acetylates 'Lys-40' in alpha-tubulin on the lumenal side of microtubules. Promotes microtubule destabilization and accelerates microtubule dynamics; this activity may be independent of acetylation activity. Acetylates alpha-tubulin with a slow enzymatic rate, due to a catalytic site that is not optimized for acetyl transfer. Enters the microtubule through each end and diffuses quickly throughout the lumen of microtubules. Acetylates only long/old microtubules because of its slow acetylation rate since it does not have time to act on dynamically unstable microtubules before the enzyme is released.</text>
</comment>
<comment type="catalytic activity">
    <reaction evidence="1">
        <text>L-lysyl-[alpha-tubulin] + acetyl-CoA = N(6)-acetyl-L-lysyl-[alpha-tubulin] + CoA + H(+)</text>
        <dbReference type="Rhea" id="RHEA:15277"/>
        <dbReference type="Rhea" id="RHEA-COMP:11278"/>
        <dbReference type="Rhea" id="RHEA-COMP:11279"/>
        <dbReference type="ChEBI" id="CHEBI:15378"/>
        <dbReference type="ChEBI" id="CHEBI:29969"/>
        <dbReference type="ChEBI" id="CHEBI:57287"/>
        <dbReference type="ChEBI" id="CHEBI:57288"/>
        <dbReference type="ChEBI" id="CHEBI:61930"/>
        <dbReference type="EC" id="2.3.1.108"/>
    </reaction>
</comment>
<comment type="similarity">
    <text evidence="1">Belongs to the acetyltransferase ATAT1 family.</text>
</comment>
<organism>
    <name type="scientific">Giardia intestinalis (strain ATCC 50803 / WB clone C6)</name>
    <name type="common">Giardia lamblia</name>
    <dbReference type="NCBI Taxonomy" id="184922"/>
    <lineage>
        <taxon>Eukaryota</taxon>
        <taxon>Metamonada</taxon>
        <taxon>Diplomonadida</taxon>
        <taxon>Hexamitidae</taxon>
        <taxon>Giardiinae</taxon>
        <taxon>Giardia</taxon>
    </lineage>
</organism>